<proteinExistence type="inferred from homology"/>
<keyword id="KW-0687">Ribonucleoprotein</keyword>
<keyword id="KW-0689">Ribosomal protein</keyword>
<keyword id="KW-0694">RNA-binding</keyword>
<keyword id="KW-0699">rRNA-binding</keyword>
<protein>
    <recommendedName>
        <fullName evidence="1">Large ribosomal subunit protein uL4</fullName>
    </recommendedName>
    <alternativeName>
        <fullName evidence="3">50S ribosomal protein L4</fullName>
    </alternativeName>
</protein>
<gene>
    <name evidence="1" type="primary">rplD</name>
    <name type="ordered locus">CGSHiGG_07390</name>
</gene>
<feature type="chain" id="PRO_1000052410" description="Large ribosomal subunit protein uL4">
    <location>
        <begin position="1"/>
        <end position="200"/>
    </location>
</feature>
<feature type="region of interest" description="Disordered" evidence="2">
    <location>
        <begin position="43"/>
        <end position="67"/>
    </location>
</feature>
<accession>A5UHT1</accession>
<dbReference type="EMBL" id="CP000672">
    <property type="protein sequence ID" value="ABR00337.1"/>
    <property type="molecule type" value="Genomic_DNA"/>
</dbReference>
<dbReference type="SMR" id="A5UHT1"/>
<dbReference type="KEGG" id="hiq:CGSHiGG_07390"/>
<dbReference type="HOGENOM" id="CLU_041575_5_2_6"/>
<dbReference type="Proteomes" id="UP000001990">
    <property type="component" value="Chromosome"/>
</dbReference>
<dbReference type="GO" id="GO:1990904">
    <property type="term" value="C:ribonucleoprotein complex"/>
    <property type="evidence" value="ECO:0007669"/>
    <property type="project" value="UniProtKB-KW"/>
</dbReference>
<dbReference type="GO" id="GO:0005840">
    <property type="term" value="C:ribosome"/>
    <property type="evidence" value="ECO:0007669"/>
    <property type="project" value="UniProtKB-KW"/>
</dbReference>
<dbReference type="GO" id="GO:0019843">
    <property type="term" value="F:rRNA binding"/>
    <property type="evidence" value="ECO:0007669"/>
    <property type="project" value="UniProtKB-UniRule"/>
</dbReference>
<dbReference type="GO" id="GO:0003735">
    <property type="term" value="F:structural constituent of ribosome"/>
    <property type="evidence" value="ECO:0007669"/>
    <property type="project" value="InterPro"/>
</dbReference>
<dbReference type="GO" id="GO:0006412">
    <property type="term" value="P:translation"/>
    <property type="evidence" value="ECO:0007669"/>
    <property type="project" value="UniProtKB-UniRule"/>
</dbReference>
<dbReference type="FunFam" id="3.40.1370.10:FF:000001">
    <property type="entry name" value="50S ribosomal protein L4"/>
    <property type="match status" value="1"/>
</dbReference>
<dbReference type="Gene3D" id="3.40.1370.10">
    <property type="match status" value="1"/>
</dbReference>
<dbReference type="HAMAP" id="MF_01328_B">
    <property type="entry name" value="Ribosomal_uL4_B"/>
    <property type="match status" value="1"/>
</dbReference>
<dbReference type="InterPro" id="IPR002136">
    <property type="entry name" value="Ribosomal_uL4"/>
</dbReference>
<dbReference type="InterPro" id="IPR013005">
    <property type="entry name" value="Ribosomal_uL4-like"/>
</dbReference>
<dbReference type="InterPro" id="IPR023574">
    <property type="entry name" value="Ribosomal_uL4_dom_sf"/>
</dbReference>
<dbReference type="NCBIfam" id="TIGR03953">
    <property type="entry name" value="rplD_bact"/>
    <property type="match status" value="1"/>
</dbReference>
<dbReference type="PANTHER" id="PTHR10746">
    <property type="entry name" value="50S RIBOSOMAL PROTEIN L4"/>
    <property type="match status" value="1"/>
</dbReference>
<dbReference type="PANTHER" id="PTHR10746:SF6">
    <property type="entry name" value="LARGE RIBOSOMAL SUBUNIT PROTEIN UL4M"/>
    <property type="match status" value="1"/>
</dbReference>
<dbReference type="Pfam" id="PF00573">
    <property type="entry name" value="Ribosomal_L4"/>
    <property type="match status" value="1"/>
</dbReference>
<dbReference type="SUPFAM" id="SSF52166">
    <property type="entry name" value="Ribosomal protein L4"/>
    <property type="match status" value="1"/>
</dbReference>
<organism>
    <name type="scientific">Haemophilus influenzae (strain PittGG)</name>
    <dbReference type="NCBI Taxonomy" id="374931"/>
    <lineage>
        <taxon>Bacteria</taxon>
        <taxon>Pseudomonadati</taxon>
        <taxon>Pseudomonadota</taxon>
        <taxon>Gammaproteobacteria</taxon>
        <taxon>Pasteurellales</taxon>
        <taxon>Pasteurellaceae</taxon>
        <taxon>Haemophilus</taxon>
    </lineage>
</organism>
<evidence type="ECO:0000255" key="1">
    <source>
        <dbReference type="HAMAP-Rule" id="MF_01328"/>
    </source>
</evidence>
<evidence type="ECO:0000256" key="2">
    <source>
        <dbReference type="SAM" id="MobiDB-lite"/>
    </source>
</evidence>
<evidence type="ECO:0000305" key="3"/>
<reference key="1">
    <citation type="journal article" date="2007" name="Genome Biol.">
        <title>Characterization and modeling of the Haemophilus influenzae core and supragenomes based on the complete genomic sequences of Rd and 12 clinical nontypeable strains.</title>
        <authorList>
            <person name="Hogg J.S."/>
            <person name="Hu F.Z."/>
            <person name="Janto B."/>
            <person name="Boissy R."/>
            <person name="Hayes J."/>
            <person name="Keefe R."/>
            <person name="Post J.C."/>
            <person name="Ehrlich G.D."/>
        </authorList>
    </citation>
    <scope>NUCLEOTIDE SEQUENCE [LARGE SCALE GENOMIC DNA]</scope>
    <source>
        <strain>PittGG</strain>
    </source>
</reference>
<sequence length="200" mass="21954">MELQVVGANALTVSETTFGREFNEALIHQVVVAYAAGARQGTRAQKTRAEVSGSGKKPWRQKGTGRARAGDIKSPIWRSGGTTFAAKPQDHSQKVNKKMYRGAIKSILSELVRQDRLVVVEKFELDAPKTKVLVQKLKDLAVEDALIITASLDENLFLAARNLYKVDVRDVQGIDPVSLIAFDKVIVTVDAVKQIEEILA</sequence>
<comment type="function">
    <text evidence="1">One of the primary rRNA binding proteins, this protein initially binds near the 5'-end of the 23S rRNA. It is important during the early stages of 50S assembly. It makes multiple contacts with different domains of the 23S rRNA in the assembled 50S subunit and ribosome.</text>
</comment>
<comment type="function">
    <text evidence="1">Forms part of the polypeptide exit tunnel.</text>
</comment>
<comment type="subunit">
    <text evidence="1">Part of the 50S ribosomal subunit.</text>
</comment>
<comment type="similarity">
    <text evidence="1">Belongs to the universal ribosomal protein uL4 family.</text>
</comment>
<name>RL4_HAEIG</name>